<proteinExistence type="inferred from homology"/>
<organism>
    <name type="scientific">Chlamydia felis (strain Fe/C-56)</name>
    <name type="common">Chlamydophila felis</name>
    <dbReference type="NCBI Taxonomy" id="264202"/>
    <lineage>
        <taxon>Bacteria</taxon>
        <taxon>Pseudomonadati</taxon>
        <taxon>Chlamydiota</taxon>
        <taxon>Chlamydiia</taxon>
        <taxon>Chlamydiales</taxon>
        <taxon>Chlamydiaceae</taxon>
        <taxon>Chlamydia/Chlamydophila group</taxon>
        <taxon>Chlamydia</taxon>
    </lineage>
</organism>
<sequence length="45" mass="5135">MKVSSSIKADPSKGDKLVRRKGRLYVINKKDPNRKQRQAGPARKK</sequence>
<dbReference type="EMBL" id="AP006861">
    <property type="protein sequence ID" value="BAE80952.1"/>
    <property type="molecule type" value="Genomic_DNA"/>
</dbReference>
<dbReference type="RefSeq" id="WP_011006789.1">
    <property type="nucleotide sequence ID" value="NC_007899.1"/>
</dbReference>
<dbReference type="SMR" id="Q255T6"/>
<dbReference type="STRING" id="264202.CF0180"/>
<dbReference type="GeneID" id="81477879"/>
<dbReference type="KEGG" id="cfe:CF0180"/>
<dbReference type="eggNOG" id="COG0257">
    <property type="taxonomic scope" value="Bacteria"/>
</dbReference>
<dbReference type="HOGENOM" id="CLU_135723_3_3_0"/>
<dbReference type="OrthoDB" id="9801558at2"/>
<dbReference type="Proteomes" id="UP000001260">
    <property type="component" value="Chromosome"/>
</dbReference>
<dbReference type="GO" id="GO:1990904">
    <property type="term" value="C:ribonucleoprotein complex"/>
    <property type="evidence" value="ECO:0007669"/>
    <property type="project" value="UniProtKB-KW"/>
</dbReference>
<dbReference type="GO" id="GO:0005840">
    <property type="term" value="C:ribosome"/>
    <property type="evidence" value="ECO:0007669"/>
    <property type="project" value="UniProtKB-KW"/>
</dbReference>
<dbReference type="GO" id="GO:0003735">
    <property type="term" value="F:structural constituent of ribosome"/>
    <property type="evidence" value="ECO:0007669"/>
    <property type="project" value="InterPro"/>
</dbReference>
<dbReference type="GO" id="GO:0006412">
    <property type="term" value="P:translation"/>
    <property type="evidence" value="ECO:0007669"/>
    <property type="project" value="UniProtKB-UniRule"/>
</dbReference>
<dbReference type="HAMAP" id="MF_00251">
    <property type="entry name" value="Ribosomal_bL36"/>
    <property type="match status" value="1"/>
</dbReference>
<dbReference type="InterPro" id="IPR000473">
    <property type="entry name" value="Ribosomal_bL36"/>
</dbReference>
<dbReference type="InterPro" id="IPR035977">
    <property type="entry name" value="Ribosomal_bL36_sp"/>
</dbReference>
<dbReference type="NCBIfam" id="TIGR01022">
    <property type="entry name" value="rpmJ_bact"/>
    <property type="match status" value="1"/>
</dbReference>
<dbReference type="Pfam" id="PF00444">
    <property type="entry name" value="Ribosomal_L36"/>
    <property type="match status" value="1"/>
</dbReference>
<dbReference type="SUPFAM" id="SSF57840">
    <property type="entry name" value="Ribosomal protein L36"/>
    <property type="match status" value="1"/>
</dbReference>
<dbReference type="PROSITE" id="PS00828">
    <property type="entry name" value="RIBOSOMAL_L36"/>
    <property type="match status" value="1"/>
</dbReference>
<reference key="1">
    <citation type="journal article" date="2006" name="DNA Res.">
        <title>Genome sequence of the cat pathogen, Chlamydophila felis.</title>
        <authorList>
            <person name="Azuma Y."/>
            <person name="Hirakawa H."/>
            <person name="Yamashita A."/>
            <person name="Cai Y."/>
            <person name="Rahman M.A."/>
            <person name="Suzuki H."/>
            <person name="Mitaku S."/>
            <person name="Toh H."/>
            <person name="Goto S."/>
            <person name="Murakami T."/>
            <person name="Sugi K."/>
            <person name="Hayashi H."/>
            <person name="Fukushi H."/>
            <person name="Hattori M."/>
            <person name="Kuhara S."/>
            <person name="Shirai M."/>
        </authorList>
    </citation>
    <scope>NUCLEOTIDE SEQUENCE [LARGE SCALE GENOMIC DNA]</scope>
    <source>
        <strain>Fe/C-56</strain>
    </source>
</reference>
<evidence type="ECO:0000255" key="1">
    <source>
        <dbReference type="HAMAP-Rule" id="MF_00251"/>
    </source>
</evidence>
<evidence type="ECO:0000256" key="2">
    <source>
        <dbReference type="SAM" id="MobiDB-lite"/>
    </source>
</evidence>
<evidence type="ECO:0000305" key="3"/>
<accession>Q255T6</accession>
<feature type="chain" id="PRO_0000302180" description="Large ribosomal subunit protein bL36">
    <location>
        <begin position="1"/>
        <end position="45"/>
    </location>
</feature>
<feature type="region of interest" description="Disordered" evidence="2">
    <location>
        <begin position="1"/>
        <end position="45"/>
    </location>
</feature>
<comment type="similarity">
    <text evidence="1">Belongs to the bacterial ribosomal protein bL36 family.</text>
</comment>
<name>RL36_CHLFF</name>
<protein>
    <recommendedName>
        <fullName evidence="1">Large ribosomal subunit protein bL36</fullName>
    </recommendedName>
    <alternativeName>
        <fullName evidence="3">50S ribosomal protein L36</fullName>
    </alternativeName>
</protein>
<keyword id="KW-0687">Ribonucleoprotein</keyword>
<keyword id="KW-0689">Ribosomal protein</keyword>
<gene>
    <name evidence="1" type="primary">rpmJ</name>
    <name type="ordered locus">CF0180</name>
</gene>